<evidence type="ECO:0000255" key="1">
    <source>
        <dbReference type="HAMAP-Rule" id="MF_00531"/>
    </source>
</evidence>
<evidence type="ECO:0000305" key="2"/>
<gene>
    <name evidence="1" type="primary">rps19</name>
</gene>
<dbReference type="EMBL" id="EF044213">
    <property type="protein sequence ID" value="ABJ89719.1"/>
    <property type="molecule type" value="Genomic_DNA"/>
</dbReference>
<dbReference type="RefSeq" id="YP_817523.1">
    <property type="nucleotide sequence ID" value="NC_008535.1"/>
</dbReference>
<dbReference type="SMR" id="A0A376"/>
<dbReference type="GeneID" id="4421820"/>
<dbReference type="OrthoDB" id="2043at2759"/>
<dbReference type="Proteomes" id="UP000515148">
    <property type="component" value="Chloroplast Pltd"/>
</dbReference>
<dbReference type="GO" id="GO:0009507">
    <property type="term" value="C:chloroplast"/>
    <property type="evidence" value="ECO:0007669"/>
    <property type="project" value="UniProtKB-SubCell"/>
</dbReference>
<dbReference type="GO" id="GO:0005763">
    <property type="term" value="C:mitochondrial small ribosomal subunit"/>
    <property type="evidence" value="ECO:0007669"/>
    <property type="project" value="TreeGrafter"/>
</dbReference>
<dbReference type="GO" id="GO:0019843">
    <property type="term" value="F:rRNA binding"/>
    <property type="evidence" value="ECO:0007669"/>
    <property type="project" value="UniProtKB-UniRule"/>
</dbReference>
<dbReference type="GO" id="GO:0003735">
    <property type="term" value="F:structural constituent of ribosome"/>
    <property type="evidence" value="ECO:0007669"/>
    <property type="project" value="InterPro"/>
</dbReference>
<dbReference type="GO" id="GO:0000028">
    <property type="term" value="P:ribosomal small subunit assembly"/>
    <property type="evidence" value="ECO:0007669"/>
    <property type="project" value="TreeGrafter"/>
</dbReference>
<dbReference type="GO" id="GO:0006412">
    <property type="term" value="P:translation"/>
    <property type="evidence" value="ECO:0007669"/>
    <property type="project" value="UniProtKB-UniRule"/>
</dbReference>
<dbReference type="FunFam" id="3.30.860.10:FF:000001">
    <property type="entry name" value="30S ribosomal protein S19"/>
    <property type="match status" value="1"/>
</dbReference>
<dbReference type="Gene3D" id="3.30.860.10">
    <property type="entry name" value="30s Ribosomal Protein S19, Chain A"/>
    <property type="match status" value="1"/>
</dbReference>
<dbReference type="HAMAP" id="MF_00531">
    <property type="entry name" value="Ribosomal_uS19"/>
    <property type="match status" value="1"/>
</dbReference>
<dbReference type="InterPro" id="IPR002222">
    <property type="entry name" value="Ribosomal_uS19"/>
</dbReference>
<dbReference type="InterPro" id="IPR005732">
    <property type="entry name" value="Ribosomal_uS19_bac-type"/>
</dbReference>
<dbReference type="InterPro" id="IPR020934">
    <property type="entry name" value="Ribosomal_uS19_CS"/>
</dbReference>
<dbReference type="InterPro" id="IPR023575">
    <property type="entry name" value="Ribosomal_uS19_SF"/>
</dbReference>
<dbReference type="NCBIfam" id="TIGR01050">
    <property type="entry name" value="rpsS_bact"/>
    <property type="match status" value="1"/>
</dbReference>
<dbReference type="PANTHER" id="PTHR11880">
    <property type="entry name" value="RIBOSOMAL PROTEIN S19P FAMILY MEMBER"/>
    <property type="match status" value="1"/>
</dbReference>
<dbReference type="PANTHER" id="PTHR11880:SF8">
    <property type="entry name" value="SMALL RIBOSOMAL SUBUNIT PROTEIN US19M"/>
    <property type="match status" value="1"/>
</dbReference>
<dbReference type="Pfam" id="PF00203">
    <property type="entry name" value="Ribosomal_S19"/>
    <property type="match status" value="1"/>
</dbReference>
<dbReference type="PIRSF" id="PIRSF002144">
    <property type="entry name" value="Ribosomal_S19"/>
    <property type="match status" value="1"/>
</dbReference>
<dbReference type="PRINTS" id="PR00975">
    <property type="entry name" value="RIBOSOMALS19"/>
</dbReference>
<dbReference type="SUPFAM" id="SSF54570">
    <property type="entry name" value="Ribosomal protein S19"/>
    <property type="match status" value="1"/>
</dbReference>
<dbReference type="PROSITE" id="PS00323">
    <property type="entry name" value="RIBOSOMAL_S19"/>
    <property type="match status" value="1"/>
</dbReference>
<comment type="function">
    <text evidence="1">Protein S19 forms a complex with S13 that binds strongly to the 16S ribosomal RNA.</text>
</comment>
<comment type="subcellular location">
    <subcellularLocation>
        <location>Plastid</location>
        <location>Chloroplast</location>
    </subcellularLocation>
</comment>
<comment type="similarity">
    <text evidence="1">Belongs to the universal ribosomal protein uS19 family.</text>
</comment>
<geneLocation type="chloroplast"/>
<organism>
    <name type="scientific">Coffea arabica</name>
    <name type="common">Arabian coffee</name>
    <dbReference type="NCBI Taxonomy" id="13443"/>
    <lineage>
        <taxon>Eukaryota</taxon>
        <taxon>Viridiplantae</taxon>
        <taxon>Streptophyta</taxon>
        <taxon>Embryophyta</taxon>
        <taxon>Tracheophyta</taxon>
        <taxon>Spermatophyta</taxon>
        <taxon>Magnoliopsida</taxon>
        <taxon>eudicotyledons</taxon>
        <taxon>Gunneridae</taxon>
        <taxon>Pentapetalae</taxon>
        <taxon>asterids</taxon>
        <taxon>lamiids</taxon>
        <taxon>Gentianales</taxon>
        <taxon>Rubiaceae</taxon>
        <taxon>Ixoroideae</taxon>
        <taxon>Gardenieae complex</taxon>
        <taxon>Bertiereae - Coffeeae clade</taxon>
        <taxon>Coffeeae</taxon>
        <taxon>Coffea</taxon>
    </lineage>
</organism>
<name>RR19_COFAR</name>
<reference key="1">
    <citation type="journal article" date="2007" name="Plant Biotechnol. J.">
        <title>The complete nucleotide sequence of the coffee (Coffea arabica L.) chloroplast genome: organization and implications for biotechnology and phylogenetic relationships amongst angiosperms.</title>
        <authorList>
            <person name="Samson N."/>
            <person name="Bausher M.G."/>
            <person name="Lee S.-B."/>
            <person name="Jansen R.K."/>
            <person name="Daniell H."/>
        </authorList>
    </citation>
    <scope>NUCLEOTIDE SEQUENCE [LARGE SCALE GENOMIC DNA]</scope>
</reference>
<proteinExistence type="inferred from homology"/>
<protein>
    <recommendedName>
        <fullName evidence="1">Small ribosomal subunit protein uS19c</fullName>
    </recommendedName>
    <alternativeName>
        <fullName evidence="2">30S ribosomal protein S19, chloroplastic</fullName>
    </alternativeName>
</protein>
<sequence length="92" mass="10498">MTRSLKKNPFVANHLLKKIDKLNTKAEKEIIVTWSRASTIIPTMIGHTIGIHNGKEHLPIYITDRMVGHKLGEFAPTLNFRGHAKSDNRSRR</sequence>
<keyword id="KW-0150">Chloroplast</keyword>
<keyword id="KW-0934">Plastid</keyword>
<keyword id="KW-1185">Reference proteome</keyword>
<keyword id="KW-0687">Ribonucleoprotein</keyword>
<keyword id="KW-0689">Ribosomal protein</keyword>
<keyword id="KW-0694">RNA-binding</keyword>
<keyword id="KW-0699">rRNA-binding</keyword>
<accession>A0A376</accession>
<feature type="chain" id="PRO_0000276902" description="Small ribosomal subunit protein uS19c">
    <location>
        <begin position="1"/>
        <end position="92"/>
    </location>
</feature>